<accession>Q57975</accession>
<gene>
    <name type="ordered locus">MJ0555</name>
</gene>
<protein>
    <recommendedName>
        <fullName>Putative aminopeptidase MJ0555</fullName>
        <ecNumber>3.4.11.-</ecNumber>
    </recommendedName>
</protein>
<evidence type="ECO:0000250" key="1"/>
<evidence type="ECO:0000305" key="2"/>
<feature type="chain" id="PRO_0000071660" description="Putative aminopeptidase MJ0555">
    <location>
        <begin position="1"/>
        <end position="350"/>
    </location>
</feature>
<feature type="active site" description="Proton acceptor" evidence="1">
    <location>
        <position position="207"/>
    </location>
</feature>
<feature type="binding site" evidence="1">
    <location>
        <position position="62"/>
    </location>
    <ligand>
        <name>a divalent metal cation</name>
        <dbReference type="ChEBI" id="CHEBI:60240"/>
        <label>1</label>
    </ligand>
</feature>
<feature type="binding site" evidence="1">
    <location>
        <position position="175"/>
    </location>
    <ligand>
        <name>a divalent metal cation</name>
        <dbReference type="ChEBI" id="CHEBI:60240"/>
        <label>1</label>
    </ligand>
</feature>
<feature type="binding site" evidence="1">
    <location>
        <position position="175"/>
    </location>
    <ligand>
        <name>a divalent metal cation</name>
        <dbReference type="ChEBI" id="CHEBI:60240"/>
        <label>2</label>
    </ligand>
</feature>
<feature type="binding site" evidence="1">
    <location>
        <position position="208"/>
    </location>
    <ligand>
        <name>a divalent metal cation</name>
        <dbReference type="ChEBI" id="CHEBI:60240"/>
        <label>2</label>
    </ligand>
</feature>
<feature type="binding site" evidence="1">
    <location>
        <position position="230"/>
    </location>
    <ligand>
        <name>a divalent metal cation</name>
        <dbReference type="ChEBI" id="CHEBI:60240"/>
        <label>1</label>
    </ligand>
</feature>
<feature type="binding site" evidence="1">
    <location>
        <position position="321"/>
    </location>
    <ligand>
        <name>a divalent metal cation</name>
        <dbReference type="ChEBI" id="CHEBI:60240"/>
        <label>2</label>
    </ligand>
</feature>
<comment type="cofactor">
    <cofactor evidence="1">
        <name>a divalent metal cation</name>
        <dbReference type="ChEBI" id="CHEBI:60240"/>
    </cofactor>
    <text evidence="1">Binds 2 divalent metal cations per subunit.</text>
</comment>
<comment type="similarity">
    <text evidence="2">Belongs to the peptidase M42 family.</text>
</comment>
<dbReference type="EC" id="3.4.11.-"/>
<dbReference type="EMBL" id="L77117">
    <property type="protein sequence ID" value="AAB98546.1"/>
    <property type="molecule type" value="Genomic_DNA"/>
</dbReference>
<dbReference type="PIR" id="C64369">
    <property type="entry name" value="C64369"/>
</dbReference>
<dbReference type="RefSeq" id="WP_010870059.1">
    <property type="nucleotide sequence ID" value="NC_000909.1"/>
</dbReference>
<dbReference type="SMR" id="Q57975"/>
<dbReference type="FunCoup" id="Q57975">
    <property type="interactions" value="1"/>
</dbReference>
<dbReference type="STRING" id="243232.MJ_0555"/>
<dbReference type="PaxDb" id="243232-MJ_0555"/>
<dbReference type="EnsemblBacteria" id="AAB98546">
    <property type="protein sequence ID" value="AAB98546"/>
    <property type="gene ID" value="MJ_0555"/>
</dbReference>
<dbReference type="GeneID" id="1451420"/>
<dbReference type="KEGG" id="mja:MJ_0555"/>
<dbReference type="eggNOG" id="arCOG01518">
    <property type="taxonomic scope" value="Archaea"/>
</dbReference>
<dbReference type="HOGENOM" id="CLU_047249_1_0_2"/>
<dbReference type="InParanoid" id="Q57975"/>
<dbReference type="OrthoDB" id="30642at2157"/>
<dbReference type="PhylomeDB" id="Q57975"/>
<dbReference type="Proteomes" id="UP000000805">
    <property type="component" value="Chromosome"/>
</dbReference>
<dbReference type="GO" id="GO:0004177">
    <property type="term" value="F:aminopeptidase activity"/>
    <property type="evidence" value="ECO:0007669"/>
    <property type="project" value="UniProtKB-KW"/>
</dbReference>
<dbReference type="GO" id="GO:0046872">
    <property type="term" value="F:metal ion binding"/>
    <property type="evidence" value="ECO:0007669"/>
    <property type="project" value="UniProtKB-KW"/>
</dbReference>
<dbReference type="GO" id="GO:0008237">
    <property type="term" value="F:metallopeptidase activity"/>
    <property type="evidence" value="ECO:0007669"/>
    <property type="project" value="UniProtKB-KW"/>
</dbReference>
<dbReference type="GO" id="GO:0006508">
    <property type="term" value="P:proteolysis"/>
    <property type="evidence" value="ECO:0007669"/>
    <property type="project" value="UniProtKB-KW"/>
</dbReference>
<dbReference type="CDD" id="cd05656">
    <property type="entry name" value="M42_Frv"/>
    <property type="match status" value="1"/>
</dbReference>
<dbReference type="Gene3D" id="2.40.30.40">
    <property type="entry name" value="Peptidase M42, domain 2"/>
    <property type="match status" value="1"/>
</dbReference>
<dbReference type="Gene3D" id="3.40.630.10">
    <property type="entry name" value="Zn peptidases"/>
    <property type="match status" value="1"/>
</dbReference>
<dbReference type="InterPro" id="IPR008007">
    <property type="entry name" value="Peptidase_M42"/>
</dbReference>
<dbReference type="InterPro" id="IPR051464">
    <property type="entry name" value="Peptidase_M42_aminopept"/>
</dbReference>
<dbReference type="InterPro" id="IPR023367">
    <property type="entry name" value="Peptidase_M42_dom2"/>
</dbReference>
<dbReference type="PANTHER" id="PTHR32481">
    <property type="entry name" value="AMINOPEPTIDASE"/>
    <property type="match status" value="1"/>
</dbReference>
<dbReference type="PANTHER" id="PTHR32481:SF0">
    <property type="entry name" value="AMINOPEPTIDASE YPDE-RELATED"/>
    <property type="match status" value="1"/>
</dbReference>
<dbReference type="Pfam" id="PF05343">
    <property type="entry name" value="Peptidase_M42"/>
    <property type="match status" value="1"/>
</dbReference>
<dbReference type="PIRSF" id="PIRSF001123">
    <property type="entry name" value="PepA_GA"/>
    <property type="match status" value="1"/>
</dbReference>
<dbReference type="SUPFAM" id="SSF101821">
    <property type="entry name" value="Aminopeptidase/glucanase lid domain"/>
    <property type="match status" value="1"/>
</dbReference>
<dbReference type="SUPFAM" id="SSF53187">
    <property type="entry name" value="Zn-dependent exopeptidases"/>
    <property type="match status" value="1"/>
</dbReference>
<reference key="1">
    <citation type="journal article" date="1996" name="Science">
        <title>Complete genome sequence of the methanogenic archaeon, Methanococcus jannaschii.</title>
        <authorList>
            <person name="Bult C.J."/>
            <person name="White O."/>
            <person name="Olsen G.J."/>
            <person name="Zhou L."/>
            <person name="Fleischmann R.D."/>
            <person name="Sutton G.G."/>
            <person name="Blake J.A."/>
            <person name="FitzGerald L.M."/>
            <person name="Clayton R.A."/>
            <person name="Gocayne J.D."/>
            <person name="Kerlavage A.R."/>
            <person name="Dougherty B.A."/>
            <person name="Tomb J.-F."/>
            <person name="Adams M.D."/>
            <person name="Reich C.I."/>
            <person name="Overbeek R."/>
            <person name="Kirkness E.F."/>
            <person name="Weinstock K.G."/>
            <person name="Merrick J.M."/>
            <person name="Glodek A."/>
            <person name="Scott J.L."/>
            <person name="Geoghagen N.S.M."/>
            <person name="Weidman J.F."/>
            <person name="Fuhrmann J.L."/>
            <person name="Nguyen D."/>
            <person name="Utterback T.R."/>
            <person name="Kelley J.M."/>
            <person name="Peterson J.D."/>
            <person name="Sadow P.W."/>
            <person name="Hanna M.C."/>
            <person name="Cotton M.D."/>
            <person name="Roberts K.M."/>
            <person name="Hurst M.A."/>
            <person name="Kaine B.P."/>
            <person name="Borodovsky M."/>
            <person name="Klenk H.-P."/>
            <person name="Fraser C.M."/>
            <person name="Smith H.O."/>
            <person name="Woese C.R."/>
            <person name="Venter J.C."/>
        </authorList>
    </citation>
    <scope>NUCLEOTIDE SEQUENCE [LARGE SCALE GENOMIC DNA]</scope>
    <source>
        <strain>ATCC 43067 / DSM 2661 / JAL-1 / JCM 10045 / NBRC 100440</strain>
    </source>
</reference>
<proteinExistence type="inferred from homology"/>
<keyword id="KW-0031">Aminopeptidase</keyword>
<keyword id="KW-0378">Hydrolase</keyword>
<keyword id="KW-0479">Metal-binding</keyword>
<keyword id="KW-0482">Metalloprotease</keyword>
<keyword id="KW-0645">Protease</keyword>
<keyword id="KW-1185">Reference proteome</keyword>
<name>Y555_METJA</name>
<organism>
    <name type="scientific">Methanocaldococcus jannaschii (strain ATCC 43067 / DSM 2661 / JAL-1 / JCM 10045 / NBRC 100440)</name>
    <name type="common">Methanococcus jannaschii</name>
    <dbReference type="NCBI Taxonomy" id="243232"/>
    <lineage>
        <taxon>Archaea</taxon>
        <taxon>Methanobacteriati</taxon>
        <taxon>Methanobacteriota</taxon>
        <taxon>Methanomada group</taxon>
        <taxon>Methanococci</taxon>
        <taxon>Methanococcales</taxon>
        <taxon>Methanocaldococcaceae</taxon>
        <taxon>Methanocaldococcus</taxon>
    </lineage>
</organism>
<sequence length="350" mass="38622">MSVVEYLKKLSKLHGISGREDSVREFMKKELEKYCDSVEIDNFGNLIAKRGNKGKKIMIAAHMDEIGLMVKYIDDNGFLKFTKIGGIYDPTILNQKVVVHGSKGDLIGVLGSKPPHRMKEEEKTKIIKYEDMFIDIGAESREEAIEMGVNIGTWVSFLSEVYDLGKNRLTGKAFDDRVGCAVLLEVMKRLSEEDIDCQVYAVGTVQEEVGLKGARVSAFKINPDVAIALDVTIAGDHPGIKKEDAPVDLGKGPVVGIVDASGRGLIAHPKVLDMIKAVSEKYKIDVQWEVGEGGTTDATAIHLTREGIPTGVISVPARYIHTPVEVIDKRDLEKTVELVYNCIKEVNNFF</sequence>